<gene>
    <name type="ordered locus">MPN_094</name>
    <name type="ORF">MP060</name>
    <name type="ORF">R02_orf140</name>
</gene>
<organism>
    <name type="scientific">Mycoplasma pneumoniae (strain ATCC 29342 / M129 / Subtype 1)</name>
    <name type="common">Mycoplasmoides pneumoniae</name>
    <dbReference type="NCBI Taxonomy" id="272634"/>
    <lineage>
        <taxon>Bacteria</taxon>
        <taxon>Bacillati</taxon>
        <taxon>Mycoplasmatota</taxon>
        <taxon>Mycoplasmoidales</taxon>
        <taxon>Mycoplasmoidaceae</taxon>
        <taxon>Mycoplasmoides</taxon>
    </lineage>
</organism>
<sequence length="140" mass="16625">MKEKIPFYNEKEFHDMMKKTKKGTFSGWYIIDKDNKSVEFSGNFNRQFKLNKPVIPVNTEYVTRKEFNEYKDSNDQRLTKIETTLAAQGEQIRIQGEQIKELQIEQKAQGETLKLILQTLQKMSDRLNKMDVRLDKLESK</sequence>
<dbReference type="EMBL" id="U00089">
    <property type="protein sequence ID" value="AAB95708.1"/>
    <property type="molecule type" value="Genomic_DNA"/>
</dbReference>
<dbReference type="PIR" id="S73386">
    <property type="entry name" value="S73386"/>
</dbReference>
<dbReference type="RefSeq" id="NP_109782.1">
    <property type="nucleotide sequence ID" value="NC_000912.1"/>
</dbReference>
<dbReference type="RefSeq" id="WP_010874451.1">
    <property type="nucleotide sequence ID" value="NZ_OU342337.1"/>
</dbReference>
<dbReference type="SMR" id="P75598"/>
<dbReference type="IntAct" id="P75598">
    <property type="interactions" value="2"/>
</dbReference>
<dbReference type="EnsemblBacteria" id="AAB95708">
    <property type="protein sequence ID" value="AAB95708"/>
    <property type="gene ID" value="MPN_094"/>
</dbReference>
<dbReference type="KEGG" id="mpn:MPN_094"/>
<dbReference type="PATRIC" id="fig|272634.6.peg.92"/>
<dbReference type="HOGENOM" id="CLU_137918_0_0_14"/>
<dbReference type="BioCyc" id="MPNE272634:G1GJ3-151-MONOMER"/>
<dbReference type="Proteomes" id="UP000000808">
    <property type="component" value="Chromosome"/>
</dbReference>
<dbReference type="Gene3D" id="6.10.250.40">
    <property type="match status" value="1"/>
</dbReference>
<dbReference type="InterPro" id="IPR002862">
    <property type="entry name" value="DUF16"/>
</dbReference>
<dbReference type="Pfam" id="PF01519">
    <property type="entry name" value="DUF16"/>
    <property type="match status" value="1"/>
</dbReference>
<dbReference type="SUPFAM" id="SSF144266">
    <property type="entry name" value="MPN010-like"/>
    <property type="match status" value="1"/>
</dbReference>
<evidence type="ECO:0000305" key="1"/>
<name>Y094_MYCPN</name>
<comment type="similarity">
    <text evidence="1">Belongs to the UPF0134 family.</text>
</comment>
<proteinExistence type="inferred from homology"/>
<feature type="chain" id="PRO_0000221593" description="UPF0134 protein MPN_094">
    <location>
        <begin position="1"/>
        <end position="140"/>
    </location>
</feature>
<accession>P75598</accession>
<keyword id="KW-1185">Reference proteome</keyword>
<reference key="1">
    <citation type="journal article" date="1996" name="Nucleic Acids Res.">
        <title>Complete sequence analysis of the genome of the bacterium Mycoplasma pneumoniae.</title>
        <authorList>
            <person name="Himmelreich R."/>
            <person name="Hilbert H."/>
            <person name="Plagens H."/>
            <person name="Pirkl E."/>
            <person name="Li B.-C."/>
            <person name="Herrmann R."/>
        </authorList>
    </citation>
    <scope>NUCLEOTIDE SEQUENCE [LARGE SCALE GENOMIC DNA]</scope>
    <source>
        <strain>ATCC 29342 / M129 / Subtype 1</strain>
    </source>
</reference>
<protein>
    <recommendedName>
        <fullName>UPF0134 protein MPN_094</fullName>
    </recommendedName>
</protein>